<gene>
    <name evidence="1" type="primary">rpsK</name>
    <name type="ordered locus">RF_0301</name>
</gene>
<comment type="function">
    <text evidence="1">Located on the platform of the 30S subunit, it bridges several disparate RNA helices of the 16S rRNA. Forms part of the Shine-Dalgarno cleft in the 70S ribosome.</text>
</comment>
<comment type="subunit">
    <text evidence="1">Part of the 30S ribosomal subunit. Interacts with proteins S7 and S18. Binds to IF-3.</text>
</comment>
<comment type="similarity">
    <text evidence="1">Belongs to the universal ribosomal protein uS11 family.</text>
</comment>
<evidence type="ECO:0000255" key="1">
    <source>
        <dbReference type="HAMAP-Rule" id="MF_01310"/>
    </source>
</evidence>
<evidence type="ECO:0000305" key="2"/>
<feature type="chain" id="PRO_0000230427" description="Small ribosomal subunit protein uS11">
    <location>
        <begin position="1"/>
        <end position="127"/>
    </location>
</feature>
<name>RS11_RICFE</name>
<organism>
    <name type="scientific">Rickettsia felis (strain ATCC VR-1525 / URRWXCal2)</name>
    <name type="common">Rickettsia azadi</name>
    <dbReference type="NCBI Taxonomy" id="315456"/>
    <lineage>
        <taxon>Bacteria</taxon>
        <taxon>Pseudomonadati</taxon>
        <taxon>Pseudomonadota</taxon>
        <taxon>Alphaproteobacteria</taxon>
        <taxon>Rickettsiales</taxon>
        <taxon>Rickettsiaceae</taxon>
        <taxon>Rickettsieae</taxon>
        <taxon>Rickettsia</taxon>
        <taxon>spotted fever group</taxon>
    </lineage>
</organism>
<proteinExistence type="inferred from homology"/>
<protein>
    <recommendedName>
        <fullName evidence="1">Small ribosomal subunit protein uS11</fullName>
    </recommendedName>
    <alternativeName>
        <fullName evidence="2">30S ribosomal protein S11</fullName>
    </alternativeName>
</protein>
<keyword id="KW-0687">Ribonucleoprotein</keyword>
<keyword id="KW-0689">Ribosomal protein</keyword>
<keyword id="KW-0694">RNA-binding</keyword>
<keyword id="KW-0699">rRNA-binding</keyword>
<dbReference type="EMBL" id="CP000053">
    <property type="protein sequence ID" value="AAY61152.1"/>
    <property type="molecule type" value="Genomic_DNA"/>
</dbReference>
<dbReference type="SMR" id="Q4UMQ6"/>
<dbReference type="STRING" id="315456.RF_0301"/>
<dbReference type="KEGG" id="rfe:RF_0301"/>
<dbReference type="eggNOG" id="COG0100">
    <property type="taxonomic scope" value="Bacteria"/>
</dbReference>
<dbReference type="HOGENOM" id="CLU_072439_5_0_5"/>
<dbReference type="OrthoDB" id="9806415at2"/>
<dbReference type="Proteomes" id="UP000008548">
    <property type="component" value="Chromosome"/>
</dbReference>
<dbReference type="GO" id="GO:1990904">
    <property type="term" value="C:ribonucleoprotein complex"/>
    <property type="evidence" value="ECO:0007669"/>
    <property type="project" value="UniProtKB-KW"/>
</dbReference>
<dbReference type="GO" id="GO:0005840">
    <property type="term" value="C:ribosome"/>
    <property type="evidence" value="ECO:0007669"/>
    <property type="project" value="UniProtKB-KW"/>
</dbReference>
<dbReference type="GO" id="GO:0019843">
    <property type="term" value="F:rRNA binding"/>
    <property type="evidence" value="ECO:0007669"/>
    <property type="project" value="UniProtKB-UniRule"/>
</dbReference>
<dbReference type="GO" id="GO:0003735">
    <property type="term" value="F:structural constituent of ribosome"/>
    <property type="evidence" value="ECO:0007669"/>
    <property type="project" value="InterPro"/>
</dbReference>
<dbReference type="GO" id="GO:0006412">
    <property type="term" value="P:translation"/>
    <property type="evidence" value="ECO:0007669"/>
    <property type="project" value="UniProtKB-UniRule"/>
</dbReference>
<dbReference type="Gene3D" id="3.30.420.80">
    <property type="entry name" value="Ribosomal protein S11"/>
    <property type="match status" value="1"/>
</dbReference>
<dbReference type="HAMAP" id="MF_01310">
    <property type="entry name" value="Ribosomal_uS11"/>
    <property type="match status" value="1"/>
</dbReference>
<dbReference type="InterPro" id="IPR001971">
    <property type="entry name" value="Ribosomal_uS11"/>
</dbReference>
<dbReference type="InterPro" id="IPR019981">
    <property type="entry name" value="Ribosomal_uS11_bac-type"/>
</dbReference>
<dbReference type="InterPro" id="IPR018102">
    <property type="entry name" value="Ribosomal_uS11_CS"/>
</dbReference>
<dbReference type="InterPro" id="IPR036967">
    <property type="entry name" value="Ribosomal_uS11_sf"/>
</dbReference>
<dbReference type="NCBIfam" id="NF003698">
    <property type="entry name" value="PRK05309.1"/>
    <property type="match status" value="1"/>
</dbReference>
<dbReference type="NCBIfam" id="TIGR03632">
    <property type="entry name" value="uS11_bact"/>
    <property type="match status" value="1"/>
</dbReference>
<dbReference type="PANTHER" id="PTHR11759">
    <property type="entry name" value="40S RIBOSOMAL PROTEIN S14/30S RIBOSOMAL PROTEIN S11"/>
    <property type="match status" value="1"/>
</dbReference>
<dbReference type="Pfam" id="PF00411">
    <property type="entry name" value="Ribosomal_S11"/>
    <property type="match status" value="1"/>
</dbReference>
<dbReference type="PIRSF" id="PIRSF002131">
    <property type="entry name" value="Ribosomal_S11"/>
    <property type="match status" value="1"/>
</dbReference>
<dbReference type="SUPFAM" id="SSF53137">
    <property type="entry name" value="Translational machinery components"/>
    <property type="match status" value="1"/>
</dbReference>
<dbReference type="PROSITE" id="PS00054">
    <property type="entry name" value="RIBOSOMAL_S11"/>
    <property type="match status" value="1"/>
</dbReference>
<reference key="1">
    <citation type="journal article" date="2005" name="PLoS Biol.">
        <title>The genome sequence of Rickettsia felis identifies the first putative conjugative plasmid in an obligate intracellular parasite.</title>
        <authorList>
            <person name="Ogata H."/>
            <person name="Renesto P."/>
            <person name="Audic S."/>
            <person name="Robert C."/>
            <person name="Blanc G."/>
            <person name="Fournier P.-E."/>
            <person name="Parinello H."/>
            <person name="Claverie J.-M."/>
            <person name="Raoult D."/>
        </authorList>
    </citation>
    <scope>NUCLEOTIDE SEQUENCE [LARGE SCALE GENOMIC DNA]</scope>
    <source>
        <strain>ATCC VR-1525 / URRWXCal2</strain>
    </source>
</reference>
<sequence>MNQTVKVKKKKKTITLGVVHIRASFNNTIVTFTDIQGNTISSASAGGNGFKGARKATPYAAQVTIDRASEKAKEYGLKTISIRIGGPGAQRESAMRALFGQNFVVTSILDVSSIAHNGVRPPKRRRV</sequence>
<accession>Q4UMQ6</accession>